<evidence type="ECO:0000256" key="1">
    <source>
        <dbReference type="SAM" id="MobiDB-lite"/>
    </source>
</evidence>
<evidence type="ECO:0000305" key="2"/>
<gene>
    <name type="primary">tsr2</name>
    <name type="synonym">dt1p1a10l</name>
    <name type="ORF">zgc:109784</name>
</gene>
<name>TSR2_DANRE</name>
<sequence>MAPLSSSTREVFSEAVRAVLETWPVLQIAVDNGFGGAFSQQKAEWMVDALQQYFTDNGDLQPDEVEDFISELMNNEFDTVVDDGSLPQVAQQVCGMFQQCEQGRLAEVREQILKLNQKKTSSGRAKATPAQTPQDDDDDDEEEAMDCEGGSAGASVSSTAVNDLHHEEEEDDGWTVVRRKK</sequence>
<feature type="chain" id="PRO_0000285589" description="Pre-rRNA-processing protein TSR2 homolog">
    <location>
        <begin position="1"/>
        <end position="181"/>
    </location>
</feature>
<feature type="region of interest" description="Disordered" evidence="1">
    <location>
        <begin position="118"/>
        <end position="181"/>
    </location>
</feature>
<feature type="compositionally biased region" description="Polar residues" evidence="1">
    <location>
        <begin position="118"/>
        <end position="133"/>
    </location>
</feature>
<feature type="compositionally biased region" description="Acidic residues" evidence="1">
    <location>
        <begin position="134"/>
        <end position="146"/>
    </location>
</feature>
<feature type="sequence conflict" description="In Ref. 1; AAQ97770." evidence="2" ref="1">
    <original>G</original>
    <variation>D</variation>
    <location>
        <position position="58"/>
    </location>
</feature>
<feature type="sequence conflict" description="In Ref. 1; AAQ97770." evidence="2" ref="1">
    <original>Q</original>
    <variation>QD</variation>
    <location>
        <position position="134"/>
    </location>
</feature>
<proteinExistence type="evidence at transcript level"/>
<keyword id="KW-1185">Reference proteome</keyword>
<keyword id="KW-0698">rRNA processing</keyword>
<reference key="1">
    <citation type="journal article" date="2004" name="Proc. Natl. Acad. Sci. U.S.A.">
        <title>Hematopoietic gene expression profile in zebrafish kidney marrow.</title>
        <authorList>
            <person name="Song H.-D."/>
            <person name="Sun X.-J."/>
            <person name="Deng M."/>
            <person name="Zhang G.-W."/>
            <person name="Zhou Y."/>
            <person name="Wu X.-Y."/>
            <person name="Sheng Y."/>
            <person name="Chen Y."/>
            <person name="Ruan Z."/>
            <person name="Jiang C.-L."/>
            <person name="Fan H.-Y."/>
            <person name="Zon L.I."/>
            <person name="Kanki J.P."/>
            <person name="Liu T.X."/>
            <person name="Look A.T."/>
            <person name="Chen Z."/>
        </authorList>
    </citation>
    <scope>NUCLEOTIDE SEQUENCE [LARGE SCALE MRNA]</scope>
    <source>
        <tissue>Kidney marrow</tissue>
    </source>
</reference>
<reference key="2">
    <citation type="submission" date="2004-03" db="EMBL/GenBank/DDBJ databases">
        <authorList>
            <consortium name="NIH - Zebrafish Gene Collection (ZGC) project"/>
        </authorList>
    </citation>
    <scope>NUCLEOTIDE SEQUENCE [LARGE SCALE MRNA]</scope>
    <source>
        <tissue>Kidney</tissue>
    </source>
</reference>
<accession>Q3KRG3</accession>
<accession>Q6TH19</accession>
<organism>
    <name type="scientific">Danio rerio</name>
    <name type="common">Zebrafish</name>
    <name type="synonym">Brachydanio rerio</name>
    <dbReference type="NCBI Taxonomy" id="7955"/>
    <lineage>
        <taxon>Eukaryota</taxon>
        <taxon>Metazoa</taxon>
        <taxon>Chordata</taxon>
        <taxon>Craniata</taxon>
        <taxon>Vertebrata</taxon>
        <taxon>Euteleostomi</taxon>
        <taxon>Actinopterygii</taxon>
        <taxon>Neopterygii</taxon>
        <taxon>Teleostei</taxon>
        <taxon>Ostariophysi</taxon>
        <taxon>Cypriniformes</taxon>
        <taxon>Danionidae</taxon>
        <taxon>Danioninae</taxon>
        <taxon>Danio</taxon>
    </lineage>
</organism>
<dbReference type="EMBL" id="AY398337">
    <property type="protein sequence ID" value="AAQ97770.1"/>
    <property type="molecule type" value="mRNA"/>
</dbReference>
<dbReference type="EMBL" id="BC066714">
    <property type="protein sequence ID" value="AAH66714.1"/>
    <property type="molecule type" value="mRNA"/>
</dbReference>
<dbReference type="SMR" id="Q3KRG3"/>
<dbReference type="FunCoup" id="Q3KRG3">
    <property type="interactions" value="1659"/>
</dbReference>
<dbReference type="STRING" id="7955.ENSDARP00000026184"/>
<dbReference type="PaxDb" id="7955-ENSDARP00000026184"/>
<dbReference type="AGR" id="ZFIN:ZDB-GENE-021231-2"/>
<dbReference type="ZFIN" id="ZDB-GENE-021231-2">
    <property type="gene designation" value="tsr2"/>
</dbReference>
<dbReference type="eggNOG" id="KOG4032">
    <property type="taxonomic scope" value="Eukaryota"/>
</dbReference>
<dbReference type="InParanoid" id="Q3KRG3"/>
<dbReference type="PRO" id="PR:Q3KRG3"/>
<dbReference type="Proteomes" id="UP000000437">
    <property type="component" value="Unplaced"/>
</dbReference>
<dbReference type="GO" id="GO:0005634">
    <property type="term" value="C:nucleus"/>
    <property type="evidence" value="ECO:0000318"/>
    <property type="project" value="GO_Central"/>
</dbReference>
<dbReference type="GO" id="GO:0000462">
    <property type="term" value="P:maturation of SSU-rRNA from tricistronic rRNA transcript (SSU-rRNA, 5.8S rRNA, LSU-rRNA)"/>
    <property type="evidence" value="ECO:0000318"/>
    <property type="project" value="GO_Central"/>
</dbReference>
<dbReference type="InterPro" id="IPR019398">
    <property type="entry name" value="Pre-rRNA_process_TSR2"/>
</dbReference>
<dbReference type="PANTHER" id="PTHR21250">
    <property type="entry name" value="PRE-RRNA-PROCESSING PROTEIN TSR2 HOMOLOG"/>
    <property type="match status" value="1"/>
</dbReference>
<dbReference type="Pfam" id="PF10273">
    <property type="entry name" value="WGG"/>
    <property type="match status" value="1"/>
</dbReference>
<protein>
    <recommendedName>
        <fullName>Pre-rRNA-processing protein TSR2 homolog</fullName>
    </recommendedName>
</protein>
<comment type="function">
    <text evidence="2">May be involved in 20S pre-rRNA processing.</text>
</comment>
<comment type="similarity">
    <text evidence="2">Belongs to the TSR2 family.</text>
</comment>